<name>SYC_XANCP</name>
<comment type="catalytic activity">
    <reaction evidence="1">
        <text>tRNA(Cys) + L-cysteine + ATP = L-cysteinyl-tRNA(Cys) + AMP + diphosphate</text>
        <dbReference type="Rhea" id="RHEA:17773"/>
        <dbReference type="Rhea" id="RHEA-COMP:9661"/>
        <dbReference type="Rhea" id="RHEA-COMP:9679"/>
        <dbReference type="ChEBI" id="CHEBI:30616"/>
        <dbReference type="ChEBI" id="CHEBI:33019"/>
        <dbReference type="ChEBI" id="CHEBI:35235"/>
        <dbReference type="ChEBI" id="CHEBI:78442"/>
        <dbReference type="ChEBI" id="CHEBI:78517"/>
        <dbReference type="ChEBI" id="CHEBI:456215"/>
        <dbReference type="EC" id="6.1.1.16"/>
    </reaction>
</comment>
<comment type="cofactor">
    <cofactor evidence="1">
        <name>Zn(2+)</name>
        <dbReference type="ChEBI" id="CHEBI:29105"/>
    </cofactor>
    <text evidence="1">Binds 1 zinc ion per subunit.</text>
</comment>
<comment type="subunit">
    <text evidence="1">Monomer.</text>
</comment>
<comment type="subcellular location">
    <subcellularLocation>
        <location evidence="1">Cytoplasm</location>
    </subcellularLocation>
</comment>
<comment type="similarity">
    <text evidence="1">Belongs to the class-I aminoacyl-tRNA synthetase family.</text>
</comment>
<reference key="1">
    <citation type="journal article" date="2002" name="Nature">
        <title>Comparison of the genomes of two Xanthomonas pathogens with differing host specificities.</title>
        <authorList>
            <person name="da Silva A.C.R."/>
            <person name="Ferro J.A."/>
            <person name="Reinach F.C."/>
            <person name="Farah C.S."/>
            <person name="Furlan L.R."/>
            <person name="Quaggio R.B."/>
            <person name="Monteiro-Vitorello C.B."/>
            <person name="Van Sluys M.A."/>
            <person name="Almeida N.F. Jr."/>
            <person name="Alves L.M.C."/>
            <person name="do Amaral A.M."/>
            <person name="Bertolini M.C."/>
            <person name="Camargo L.E.A."/>
            <person name="Camarotte G."/>
            <person name="Cannavan F."/>
            <person name="Cardozo J."/>
            <person name="Chambergo F."/>
            <person name="Ciapina L.P."/>
            <person name="Cicarelli R.M.B."/>
            <person name="Coutinho L.L."/>
            <person name="Cursino-Santos J.R."/>
            <person name="El-Dorry H."/>
            <person name="Faria J.B."/>
            <person name="Ferreira A.J.S."/>
            <person name="Ferreira R.C.C."/>
            <person name="Ferro M.I.T."/>
            <person name="Formighieri E.F."/>
            <person name="Franco M.C."/>
            <person name="Greggio C.C."/>
            <person name="Gruber A."/>
            <person name="Katsuyama A.M."/>
            <person name="Kishi L.T."/>
            <person name="Leite R.P."/>
            <person name="Lemos E.G.M."/>
            <person name="Lemos M.V.F."/>
            <person name="Locali E.C."/>
            <person name="Machado M.A."/>
            <person name="Madeira A.M.B.N."/>
            <person name="Martinez-Rossi N.M."/>
            <person name="Martins E.C."/>
            <person name="Meidanis J."/>
            <person name="Menck C.F.M."/>
            <person name="Miyaki C.Y."/>
            <person name="Moon D.H."/>
            <person name="Moreira L.M."/>
            <person name="Novo M.T.M."/>
            <person name="Okura V.K."/>
            <person name="Oliveira M.C."/>
            <person name="Oliveira V.R."/>
            <person name="Pereira H.A."/>
            <person name="Rossi A."/>
            <person name="Sena J.A.D."/>
            <person name="Silva C."/>
            <person name="de Souza R.F."/>
            <person name="Spinola L.A.F."/>
            <person name="Takita M.A."/>
            <person name="Tamura R.E."/>
            <person name="Teixeira E.C."/>
            <person name="Tezza R.I.D."/>
            <person name="Trindade dos Santos M."/>
            <person name="Truffi D."/>
            <person name="Tsai S.M."/>
            <person name="White F.F."/>
            <person name="Setubal J.C."/>
            <person name="Kitajima J.P."/>
        </authorList>
    </citation>
    <scope>NUCLEOTIDE SEQUENCE [LARGE SCALE GENOMIC DNA]</scope>
    <source>
        <strain>ATCC 33913 / DSM 3586 / NCPPB 528 / LMG 568 / P 25</strain>
    </source>
</reference>
<gene>
    <name evidence="1" type="primary">cysS</name>
    <name type="ordered locus">XCC2251</name>
</gene>
<proteinExistence type="inferred from homology"/>
<keyword id="KW-0030">Aminoacyl-tRNA synthetase</keyword>
<keyword id="KW-0067">ATP-binding</keyword>
<keyword id="KW-0963">Cytoplasm</keyword>
<keyword id="KW-0436">Ligase</keyword>
<keyword id="KW-0479">Metal-binding</keyword>
<keyword id="KW-0547">Nucleotide-binding</keyword>
<keyword id="KW-0648">Protein biosynthesis</keyword>
<keyword id="KW-1185">Reference proteome</keyword>
<keyword id="KW-0862">Zinc</keyword>
<evidence type="ECO:0000255" key="1">
    <source>
        <dbReference type="HAMAP-Rule" id="MF_00041"/>
    </source>
</evidence>
<sequence length="457" mass="49558">MPMSLRLHNNLTRRVEPFAPLDPSSPTLYVCGPTVYNYAHIGNARGPVVFDVLAALLRRRYGALRYARNITDVDDKINAAAQAQGVPISTITDRFAAIYRQDMAALGVVPPDIEPEATAHIPQIVAMIEQLIASAHAYAAEGHVLFAVASFADYGKLSRRDPDEMLAGARVDVAPYKRDPGDFVLWKPSSDDLPGWDSPWGRGRPGWHIECSAMAATHLGPTIDIHAGGVDLQFPHHENEIAQSECAHGGAVFARFWLHNGMLNFSGAKMSKSLGNIETVHDLIAKHPPEALRYALLSAHYRQPLDWSDGLIEQAKNTLDRLYGTLRDLHDVAASAVIPAPVEAALDDDLNTPQALAEVARIAGEARKANDAADRARLKAELLGAGLALGLLQQEPAAWFSRGADAGDDARIAALVDERSAAKKAKDFARADAIRQQLADEGIVLEDTAQGVRWKRA</sequence>
<protein>
    <recommendedName>
        <fullName evidence="1">Cysteine--tRNA ligase</fullName>
        <ecNumber evidence="1">6.1.1.16</ecNumber>
    </recommendedName>
    <alternativeName>
        <fullName evidence="1">Cysteinyl-tRNA synthetase</fullName>
        <shortName evidence="1">CysRS</shortName>
    </alternativeName>
</protein>
<organism>
    <name type="scientific">Xanthomonas campestris pv. campestris (strain ATCC 33913 / DSM 3586 / NCPPB 528 / LMG 568 / P 25)</name>
    <dbReference type="NCBI Taxonomy" id="190485"/>
    <lineage>
        <taxon>Bacteria</taxon>
        <taxon>Pseudomonadati</taxon>
        <taxon>Pseudomonadota</taxon>
        <taxon>Gammaproteobacteria</taxon>
        <taxon>Lysobacterales</taxon>
        <taxon>Lysobacteraceae</taxon>
        <taxon>Xanthomonas</taxon>
    </lineage>
</organism>
<feature type="chain" id="PRO_0000159526" description="Cysteine--tRNA ligase">
    <location>
        <begin position="1"/>
        <end position="457"/>
    </location>
</feature>
<feature type="short sequence motif" description="'HIGH' region">
    <location>
        <begin position="33"/>
        <end position="43"/>
    </location>
</feature>
<feature type="short sequence motif" description="'KMSKS' region">
    <location>
        <begin position="269"/>
        <end position="273"/>
    </location>
</feature>
<feature type="binding site" evidence="1">
    <location>
        <position position="31"/>
    </location>
    <ligand>
        <name>Zn(2+)</name>
        <dbReference type="ChEBI" id="CHEBI:29105"/>
    </ligand>
</feature>
<feature type="binding site" evidence="1">
    <location>
        <position position="211"/>
    </location>
    <ligand>
        <name>Zn(2+)</name>
        <dbReference type="ChEBI" id="CHEBI:29105"/>
    </ligand>
</feature>
<feature type="binding site" evidence="1">
    <location>
        <position position="236"/>
    </location>
    <ligand>
        <name>Zn(2+)</name>
        <dbReference type="ChEBI" id="CHEBI:29105"/>
    </ligand>
</feature>
<feature type="binding site" evidence="1">
    <location>
        <position position="240"/>
    </location>
    <ligand>
        <name>Zn(2+)</name>
        <dbReference type="ChEBI" id="CHEBI:29105"/>
    </ligand>
</feature>
<feature type="binding site" evidence="1">
    <location>
        <position position="272"/>
    </location>
    <ligand>
        <name>ATP</name>
        <dbReference type="ChEBI" id="CHEBI:30616"/>
    </ligand>
</feature>
<accession>Q8P8J0</accession>
<dbReference type="EC" id="6.1.1.16" evidence="1"/>
<dbReference type="EMBL" id="AE008922">
    <property type="protein sequence ID" value="AAM41530.1"/>
    <property type="molecule type" value="Genomic_DNA"/>
</dbReference>
<dbReference type="RefSeq" id="NP_637606.1">
    <property type="nucleotide sequence ID" value="NC_003902.1"/>
</dbReference>
<dbReference type="SMR" id="Q8P8J0"/>
<dbReference type="STRING" id="190485.XCC2251"/>
<dbReference type="EnsemblBacteria" id="AAM41530">
    <property type="protein sequence ID" value="AAM41530"/>
    <property type="gene ID" value="XCC2251"/>
</dbReference>
<dbReference type="KEGG" id="xcc:XCC2251"/>
<dbReference type="PATRIC" id="fig|190485.4.peg.2401"/>
<dbReference type="HOGENOM" id="CLU_013528_0_1_6"/>
<dbReference type="OrthoDB" id="9815130at2"/>
<dbReference type="Proteomes" id="UP000001010">
    <property type="component" value="Chromosome"/>
</dbReference>
<dbReference type="GO" id="GO:0005737">
    <property type="term" value="C:cytoplasm"/>
    <property type="evidence" value="ECO:0000318"/>
    <property type="project" value="GO_Central"/>
</dbReference>
<dbReference type="GO" id="GO:0005829">
    <property type="term" value="C:cytosol"/>
    <property type="evidence" value="ECO:0000318"/>
    <property type="project" value="GO_Central"/>
</dbReference>
<dbReference type="GO" id="GO:0005524">
    <property type="term" value="F:ATP binding"/>
    <property type="evidence" value="ECO:0000318"/>
    <property type="project" value="GO_Central"/>
</dbReference>
<dbReference type="GO" id="GO:0004817">
    <property type="term" value="F:cysteine-tRNA ligase activity"/>
    <property type="evidence" value="ECO:0000318"/>
    <property type="project" value="GO_Central"/>
</dbReference>
<dbReference type="GO" id="GO:0008270">
    <property type="term" value="F:zinc ion binding"/>
    <property type="evidence" value="ECO:0007669"/>
    <property type="project" value="UniProtKB-UniRule"/>
</dbReference>
<dbReference type="GO" id="GO:0006423">
    <property type="term" value="P:cysteinyl-tRNA aminoacylation"/>
    <property type="evidence" value="ECO:0000318"/>
    <property type="project" value="GO_Central"/>
</dbReference>
<dbReference type="CDD" id="cd00672">
    <property type="entry name" value="CysRS_core"/>
    <property type="match status" value="1"/>
</dbReference>
<dbReference type="FunFam" id="3.40.50.620:FF:000068">
    <property type="entry name" value="Cysteine--tRNA ligase"/>
    <property type="match status" value="1"/>
</dbReference>
<dbReference type="Gene3D" id="1.20.120.1910">
    <property type="entry name" value="Cysteine-tRNA ligase, C-terminal anti-codon recognition domain"/>
    <property type="match status" value="1"/>
</dbReference>
<dbReference type="Gene3D" id="3.40.50.620">
    <property type="entry name" value="HUPs"/>
    <property type="match status" value="1"/>
</dbReference>
<dbReference type="HAMAP" id="MF_00041">
    <property type="entry name" value="Cys_tRNA_synth"/>
    <property type="match status" value="1"/>
</dbReference>
<dbReference type="InterPro" id="IPR015803">
    <property type="entry name" value="Cys-tRNA-ligase"/>
</dbReference>
<dbReference type="InterPro" id="IPR015273">
    <property type="entry name" value="Cys-tRNA-synt_Ia_DALR"/>
</dbReference>
<dbReference type="InterPro" id="IPR024909">
    <property type="entry name" value="Cys-tRNA/MSH_ligase"/>
</dbReference>
<dbReference type="InterPro" id="IPR014729">
    <property type="entry name" value="Rossmann-like_a/b/a_fold"/>
</dbReference>
<dbReference type="InterPro" id="IPR032678">
    <property type="entry name" value="tRNA-synt_1_cat_dom"/>
</dbReference>
<dbReference type="InterPro" id="IPR009080">
    <property type="entry name" value="tRNAsynth_Ia_anticodon-bd"/>
</dbReference>
<dbReference type="NCBIfam" id="TIGR00435">
    <property type="entry name" value="cysS"/>
    <property type="match status" value="1"/>
</dbReference>
<dbReference type="PANTHER" id="PTHR10890:SF3">
    <property type="entry name" value="CYSTEINE--TRNA LIGASE, CYTOPLASMIC"/>
    <property type="match status" value="1"/>
</dbReference>
<dbReference type="PANTHER" id="PTHR10890">
    <property type="entry name" value="CYSTEINYL-TRNA SYNTHETASE"/>
    <property type="match status" value="1"/>
</dbReference>
<dbReference type="Pfam" id="PF09190">
    <property type="entry name" value="DALR_2"/>
    <property type="match status" value="1"/>
</dbReference>
<dbReference type="Pfam" id="PF01406">
    <property type="entry name" value="tRNA-synt_1e"/>
    <property type="match status" value="1"/>
</dbReference>
<dbReference type="PRINTS" id="PR00983">
    <property type="entry name" value="TRNASYNTHCYS"/>
</dbReference>
<dbReference type="SMART" id="SM00840">
    <property type="entry name" value="DALR_2"/>
    <property type="match status" value="1"/>
</dbReference>
<dbReference type="SUPFAM" id="SSF47323">
    <property type="entry name" value="Anticodon-binding domain of a subclass of class I aminoacyl-tRNA synthetases"/>
    <property type="match status" value="1"/>
</dbReference>
<dbReference type="SUPFAM" id="SSF52374">
    <property type="entry name" value="Nucleotidylyl transferase"/>
    <property type="match status" value="1"/>
</dbReference>